<reference key="1">
    <citation type="journal article" date="2010" name="PLoS Genet.">
        <title>De novo assembly of a 40 Mb eukaryotic genome from short sequence reads: Sordaria macrospora, a model organism for fungal morphogenesis.</title>
        <authorList>
            <person name="Nowrousian M."/>
            <person name="Stajich J.E."/>
            <person name="Chu M."/>
            <person name="Engh I."/>
            <person name="Espagne E."/>
            <person name="Halliday K."/>
            <person name="Kamerewerd J."/>
            <person name="Kempken F."/>
            <person name="Knab B."/>
            <person name="Kuo H.-C."/>
            <person name="Osiewacz H.D."/>
            <person name="Poeggeler S."/>
            <person name="Read N.D."/>
            <person name="Seiler S."/>
            <person name="Smith K.M."/>
            <person name="Zickler D."/>
            <person name="Kueck U."/>
            <person name="Freitag M."/>
        </authorList>
    </citation>
    <scope>NUCLEOTIDE SEQUENCE [LARGE SCALE GENOMIC DNA]</scope>
    <source>
        <strain>ATCC MYA-333 / DSM 997 / K(L3346) / K-hell</strain>
    </source>
</reference>
<sequence length="438" mass="47884">MAAQAAPAEELSKLSVEETKPVSAAANGNDSNAESGDEEGEEGTTPAAGAAKKKKKRKPRKKKKAPTSQSEPPRVLVSQLFPNKQYPKGEEVEYVNDNLSRVTNEEKRHLDSLASNQEFLTDYRHAAEVHRQVRQWAQKSIKPGQTLTEIAENIEDSVRALTGHTGLEEGDALVAGMGFPTGLSINHCAAHYTPNAGNKMVLQEDDVMKVDFGVHVNGRIVDSAFTVAFNPRYDPLLEAVKAATNAGIKEAGIDVRVGDIGAAIQEVMESYEVEINGQMLPVKSIRNLNGHTISHYSIHGTKSVPIVKSNDQTKMEEGDVFAIETFGSTGNGYVHEEGEVSHYAKRGDAAKVDLRLSSAKSLLKVIDKNFGTLPFCRRYIDRLGQDKYLLGLNNLVSQGIVEAYPPLVDKKGSYTAQYEHTILLRPTVKEVISRGDDF</sequence>
<evidence type="ECO:0000255" key="1">
    <source>
        <dbReference type="HAMAP-Rule" id="MF_03175"/>
    </source>
</evidence>
<evidence type="ECO:0000256" key="2">
    <source>
        <dbReference type="SAM" id="MobiDB-lite"/>
    </source>
</evidence>
<dbReference type="EC" id="3.4.11.18" evidence="1"/>
<dbReference type="EMBL" id="CABT02000026">
    <property type="protein sequence ID" value="CCC12403.1"/>
    <property type="molecule type" value="Genomic_DNA"/>
</dbReference>
<dbReference type="RefSeq" id="XP_003349297.1">
    <property type="nucleotide sequence ID" value="XM_003349249.1"/>
</dbReference>
<dbReference type="SMR" id="D1ZEN1"/>
<dbReference type="FunCoup" id="D1ZEN1">
    <property type="interactions" value="1128"/>
</dbReference>
<dbReference type="STRING" id="771870.D1ZEN1"/>
<dbReference type="MEROPS" id="M24.002"/>
<dbReference type="GeneID" id="10806780"/>
<dbReference type="KEGG" id="smp:10806780"/>
<dbReference type="VEuPathDB" id="FungiDB:SMAC_05580"/>
<dbReference type="eggNOG" id="KOG2775">
    <property type="taxonomic scope" value="Eukaryota"/>
</dbReference>
<dbReference type="HOGENOM" id="CLU_015857_7_1_1"/>
<dbReference type="InParanoid" id="D1ZEN1"/>
<dbReference type="OMA" id="PFAKRWL"/>
<dbReference type="OrthoDB" id="7848262at2759"/>
<dbReference type="Proteomes" id="UP000001881">
    <property type="component" value="Unassembled WGS sequence"/>
</dbReference>
<dbReference type="GO" id="GO:0005737">
    <property type="term" value="C:cytoplasm"/>
    <property type="evidence" value="ECO:0007669"/>
    <property type="project" value="UniProtKB-SubCell"/>
</dbReference>
<dbReference type="GO" id="GO:0004239">
    <property type="term" value="F:initiator methionyl aminopeptidase activity"/>
    <property type="evidence" value="ECO:0007669"/>
    <property type="project" value="UniProtKB-UniRule"/>
</dbReference>
<dbReference type="GO" id="GO:0046872">
    <property type="term" value="F:metal ion binding"/>
    <property type="evidence" value="ECO:0007669"/>
    <property type="project" value="UniProtKB-UniRule"/>
</dbReference>
<dbReference type="GO" id="GO:0070006">
    <property type="term" value="F:metalloaminopeptidase activity"/>
    <property type="evidence" value="ECO:0007669"/>
    <property type="project" value="UniProtKB-UniRule"/>
</dbReference>
<dbReference type="GO" id="GO:0006508">
    <property type="term" value="P:proteolysis"/>
    <property type="evidence" value="ECO:0007669"/>
    <property type="project" value="UniProtKB-KW"/>
</dbReference>
<dbReference type="CDD" id="cd01088">
    <property type="entry name" value="MetAP2"/>
    <property type="match status" value="1"/>
</dbReference>
<dbReference type="Gene3D" id="3.90.230.10">
    <property type="entry name" value="Creatinase/methionine aminopeptidase superfamily"/>
    <property type="match status" value="1"/>
</dbReference>
<dbReference type="Gene3D" id="1.10.10.10">
    <property type="entry name" value="Winged helix-like DNA-binding domain superfamily/Winged helix DNA-binding domain"/>
    <property type="match status" value="1"/>
</dbReference>
<dbReference type="HAMAP" id="MF_03175">
    <property type="entry name" value="MetAP_2_euk"/>
    <property type="match status" value="1"/>
</dbReference>
<dbReference type="InterPro" id="IPR036005">
    <property type="entry name" value="Creatinase/aminopeptidase-like"/>
</dbReference>
<dbReference type="InterPro" id="IPR050247">
    <property type="entry name" value="Met_Aminopeptidase_Type2"/>
</dbReference>
<dbReference type="InterPro" id="IPR000994">
    <property type="entry name" value="Pept_M24"/>
</dbReference>
<dbReference type="InterPro" id="IPR001714">
    <property type="entry name" value="Pept_M24_MAP"/>
</dbReference>
<dbReference type="InterPro" id="IPR002468">
    <property type="entry name" value="Pept_M24A_MAP2"/>
</dbReference>
<dbReference type="InterPro" id="IPR018349">
    <property type="entry name" value="Pept_M24A_MAP2_BS"/>
</dbReference>
<dbReference type="InterPro" id="IPR036388">
    <property type="entry name" value="WH-like_DNA-bd_sf"/>
</dbReference>
<dbReference type="InterPro" id="IPR036390">
    <property type="entry name" value="WH_DNA-bd_sf"/>
</dbReference>
<dbReference type="NCBIfam" id="TIGR00501">
    <property type="entry name" value="met_pdase_II"/>
    <property type="match status" value="1"/>
</dbReference>
<dbReference type="PANTHER" id="PTHR45777">
    <property type="entry name" value="METHIONINE AMINOPEPTIDASE 2"/>
    <property type="match status" value="1"/>
</dbReference>
<dbReference type="PANTHER" id="PTHR45777:SF2">
    <property type="entry name" value="METHIONINE AMINOPEPTIDASE 2"/>
    <property type="match status" value="1"/>
</dbReference>
<dbReference type="Pfam" id="PF00557">
    <property type="entry name" value="Peptidase_M24"/>
    <property type="match status" value="1"/>
</dbReference>
<dbReference type="PRINTS" id="PR00599">
    <property type="entry name" value="MAPEPTIDASE"/>
</dbReference>
<dbReference type="SUPFAM" id="SSF55920">
    <property type="entry name" value="Creatinase/aminopeptidase"/>
    <property type="match status" value="1"/>
</dbReference>
<dbReference type="SUPFAM" id="SSF46785">
    <property type="entry name" value="Winged helix' DNA-binding domain"/>
    <property type="match status" value="1"/>
</dbReference>
<dbReference type="PROSITE" id="PS01202">
    <property type="entry name" value="MAP_2"/>
    <property type="match status" value="1"/>
</dbReference>
<comment type="function">
    <text evidence="1">Cotranslationally removes the N-terminal methionine from nascent proteins. The N-terminal methionine is often cleaved when the second residue in the primary sequence is small and uncharged (Met-Ala-, Cys, Gly, Pro, Ser, Thr, or Val).</text>
</comment>
<comment type="catalytic activity">
    <reaction evidence="1">
        <text>Release of N-terminal amino acids, preferentially methionine, from peptides and arylamides.</text>
        <dbReference type="EC" id="3.4.11.18"/>
    </reaction>
</comment>
<comment type="cofactor">
    <cofactor evidence="1">
        <name>Co(2+)</name>
        <dbReference type="ChEBI" id="CHEBI:48828"/>
    </cofactor>
    <cofactor evidence="1">
        <name>Zn(2+)</name>
        <dbReference type="ChEBI" id="CHEBI:29105"/>
    </cofactor>
    <cofactor evidence="1">
        <name>Mn(2+)</name>
        <dbReference type="ChEBI" id="CHEBI:29035"/>
    </cofactor>
    <cofactor evidence="1">
        <name>Fe(2+)</name>
        <dbReference type="ChEBI" id="CHEBI:29033"/>
    </cofactor>
    <text evidence="1">Binds 2 divalent metal cations per subunit. Has a high-affinity and a low affinity metal-binding site. The true nature of the physiological cofactor is under debate. The enzyme is active with cobalt, zinc, manganese or divalent iron ions. Most likely, methionine aminopeptidases function as mononuclear Fe(2+)-metalloproteases under physiological conditions, and the catalytically relevant metal-binding site has been assigned to the histidine-containing high-affinity site.</text>
</comment>
<comment type="subcellular location">
    <subcellularLocation>
        <location evidence="1">Cytoplasm</location>
    </subcellularLocation>
</comment>
<comment type="similarity">
    <text evidence="1">Belongs to the peptidase M24A family. Methionine aminopeptidase eukaryotic type 2 subfamily.</text>
</comment>
<accession>D1ZEN1</accession>
<accession>F7W449</accession>
<feature type="chain" id="PRO_0000407669" description="Methionine aminopeptidase 2">
    <location>
        <begin position="1"/>
        <end position="438"/>
    </location>
</feature>
<feature type="region of interest" description="Disordered" evidence="2">
    <location>
        <begin position="1"/>
        <end position="89"/>
    </location>
</feature>
<feature type="compositionally biased region" description="Basic and acidic residues" evidence="2">
    <location>
        <begin position="10"/>
        <end position="20"/>
    </location>
</feature>
<feature type="compositionally biased region" description="Basic residues" evidence="2">
    <location>
        <begin position="51"/>
        <end position="65"/>
    </location>
</feature>
<feature type="binding site" evidence="1">
    <location>
        <position position="191"/>
    </location>
    <ligand>
        <name>substrate</name>
    </ligand>
</feature>
<feature type="binding site" evidence="1">
    <location>
        <position position="211"/>
    </location>
    <ligand>
        <name>a divalent metal cation</name>
        <dbReference type="ChEBI" id="CHEBI:60240"/>
        <label>1</label>
    </ligand>
</feature>
<feature type="binding site" evidence="1">
    <location>
        <position position="222"/>
    </location>
    <ligand>
        <name>a divalent metal cation</name>
        <dbReference type="ChEBI" id="CHEBI:60240"/>
        <label>1</label>
    </ligand>
</feature>
<feature type="binding site" evidence="1">
    <location>
        <position position="222"/>
    </location>
    <ligand>
        <name>a divalent metal cation</name>
        <dbReference type="ChEBI" id="CHEBI:60240"/>
        <label>2</label>
        <note>catalytic</note>
    </ligand>
</feature>
<feature type="binding site" evidence="1">
    <location>
        <position position="291"/>
    </location>
    <ligand>
        <name>a divalent metal cation</name>
        <dbReference type="ChEBI" id="CHEBI:60240"/>
        <label>2</label>
        <note>catalytic</note>
    </ligand>
</feature>
<feature type="binding site" evidence="1">
    <location>
        <position position="299"/>
    </location>
    <ligand>
        <name>substrate</name>
    </ligand>
</feature>
<feature type="binding site" evidence="1">
    <location>
        <position position="324"/>
    </location>
    <ligand>
        <name>a divalent metal cation</name>
        <dbReference type="ChEBI" id="CHEBI:60240"/>
        <label>2</label>
        <note>catalytic</note>
    </ligand>
</feature>
<feature type="binding site" evidence="1">
    <location>
        <position position="419"/>
    </location>
    <ligand>
        <name>a divalent metal cation</name>
        <dbReference type="ChEBI" id="CHEBI:60240"/>
        <label>1</label>
    </ligand>
</feature>
<feature type="binding site" evidence="1">
    <location>
        <position position="419"/>
    </location>
    <ligand>
        <name>a divalent metal cation</name>
        <dbReference type="ChEBI" id="CHEBI:60240"/>
        <label>2</label>
        <note>catalytic</note>
    </ligand>
</feature>
<name>MAP2_SORMK</name>
<protein>
    <recommendedName>
        <fullName evidence="1">Methionine aminopeptidase 2</fullName>
        <shortName evidence="1">MAP 2</shortName>
        <shortName evidence="1">MetAP 2</shortName>
        <ecNumber evidence="1">3.4.11.18</ecNumber>
    </recommendedName>
    <alternativeName>
        <fullName evidence="1">Peptidase M</fullName>
    </alternativeName>
</protein>
<organism>
    <name type="scientific">Sordaria macrospora (strain ATCC MYA-333 / DSM 997 / K(L3346) / K-hell)</name>
    <dbReference type="NCBI Taxonomy" id="771870"/>
    <lineage>
        <taxon>Eukaryota</taxon>
        <taxon>Fungi</taxon>
        <taxon>Dikarya</taxon>
        <taxon>Ascomycota</taxon>
        <taxon>Pezizomycotina</taxon>
        <taxon>Sordariomycetes</taxon>
        <taxon>Sordariomycetidae</taxon>
        <taxon>Sordariales</taxon>
        <taxon>Sordariaceae</taxon>
        <taxon>Sordaria</taxon>
    </lineage>
</organism>
<proteinExistence type="inferred from homology"/>
<keyword id="KW-0031">Aminopeptidase</keyword>
<keyword id="KW-0963">Cytoplasm</keyword>
<keyword id="KW-0378">Hydrolase</keyword>
<keyword id="KW-0479">Metal-binding</keyword>
<keyword id="KW-0645">Protease</keyword>
<keyword id="KW-1185">Reference proteome</keyword>
<gene>
    <name type="ORF">SMAC_05580</name>
</gene>